<keyword id="KW-0143">Chaperone</keyword>
<keyword id="KW-0963">Cytoplasm</keyword>
<keyword id="KW-1015">Disulfide bond</keyword>
<keyword id="KW-0676">Redox-active center</keyword>
<keyword id="KW-0346">Stress response</keyword>
<keyword id="KW-0862">Zinc</keyword>
<evidence type="ECO:0000255" key="1">
    <source>
        <dbReference type="HAMAP-Rule" id="MF_00117"/>
    </source>
</evidence>
<sequence length="292" mass="32534">MPQHDQLHRYLFENFAVRGELVTVSETLQQILENHDYPQPVKNVLAELLVATSLLTATLKFDGDITVQLQGDGPMNLAVINGNNNQQMRGVARVQGEIPENADLKTLVGNGYVVITITPSEGERYQGVVGLEGDTLAACLEDYFMRSEQLPTRLFIRTGDVDGKPAAGGMLLQVMPAQNAQQDDFDHLATLTETIKTEELLTLPANEVLWRLYHEEEVTVYDPQDVEFKCTCSRERCADALKTLPDEEVDSILAEDGEIDMHCDYCGNHYLFNAMDIAEIRNNASPADPQVH</sequence>
<proteinExistence type="inferred from homology"/>
<gene>
    <name evidence="1" type="primary">hslO</name>
    <name type="ordered locus">ECIAI1_3540</name>
</gene>
<organism>
    <name type="scientific">Escherichia coli O8 (strain IAI1)</name>
    <dbReference type="NCBI Taxonomy" id="585034"/>
    <lineage>
        <taxon>Bacteria</taxon>
        <taxon>Pseudomonadati</taxon>
        <taxon>Pseudomonadota</taxon>
        <taxon>Gammaproteobacteria</taxon>
        <taxon>Enterobacterales</taxon>
        <taxon>Enterobacteriaceae</taxon>
        <taxon>Escherichia</taxon>
    </lineage>
</organism>
<comment type="function">
    <text evidence="1">Redox regulated molecular chaperone. Protects both thermally unfolding and oxidatively damaged proteins from irreversible aggregation. Plays an important role in the bacterial defense system toward oxidative stress.</text>
</comment>
<comment type="subcellular location">
    <subcellularLocation>
        <location evidence="1">Cytoplasm</location>
    </subcellularLocation>
</comment>
<comment type="PTM">
    <text evidence="1">Under oxidizing conditions two disulfide bonds are formed involving the reactive cysteines. Under reducing conditions zinc is bound to the reactive cysteines and the protein is inactive.</text>
</comment>
<comment type="similarity">
    <text evidence="1">Belongs to the HSP33 family.</text>
</comment>
<reference key="1">
    <citation type="journal article" date="2009" name="PLoS Genet.">
        <title>Organised genome dynamics in the Escherichia coli species results in highly diverse adaptive paths.</title>
        <authorList>
            <person name="Touchon M."/>
            <person name="Hoede C."/>
            <person name="Tenaillon O."/>
            <person name="Barbe V."/>
            <person name="Baeriswyl S."/>
            <person name="Bidet P."/>
            <person name="Bingen E."/>
            <person name="Bonacorsi S."/>
            <person name="Bouchier C."/>
            <person name="Bouvet O."/>
            <person name="Calteau A."/>
            <person name="Chiapello H."/>
            <person name="Clermont O."/>
            <person name="Cruveiller S."/>
            <person name="Danchin A."/>
            <person name="Diard M."/>
            <person name="Dossat C."/>
            <person name="Karoui M.E."/>
            <person name="Frapy E."/>
            <person name="Garry L."/>
            <person name="Ghigo J.M."/>
            <person name="Gilles A.M."/>
            <person name="Johnson J."/>
            <person name="Le Bouguenec C."/>
            <person name="Lescat M."/>
            <person name="Mangenot S."/>
            <person name="Martinez-Jehanne V."/>
            <person name="Matic I."/>
            <person name="Nassif X."/>
            <person name="Oztas S."/>
            <person name="Petit M.A."/>
            <person name="Pichon C."/>
            <person name="Rouy Z."/>
            <person name="Ruf C.S."/>
            <person name="Schneider D."/>
            <person name="Tourret J."/>
            <person name="Vacherie B."/>
            <person name="Vallenet D."/>
            <person name="Medigue C."/>
            <person name="Rocha E.P.C."/>
            <person name="Denamur E."/>
        </authorList>
    </citation>
    <scope>NUCLEOTIDE SEQUENCE [LARGE SCALE GENOMIC DNA]</scope>
    <source>
        <strain>IAI1</strain>
    </source>
</reference>
<accession>B7M1V3</accession>
<protein>
    <recommendedName>
        <fullName evidence="1">33 kDa chaperonin</fullName>
    </recommendedName>
    <alternativeName>
        <fullName evidence="1">Heat shock protein 33 homolog</fullName>
        <shortName evidence="1">HSP33</shortName>
    </alternativeName>
</protein>
<feature type="chain" id="PRO_1000190462" description="33 kDa chaperonin">
    <location>
        <begin position="1"/>
        <end position="292"/>
    </location>
</feature>
<feature type="disulfide bond" description="Redox-active" evidence="1">
    <location>
        <begin position="230"/>
        <end position="232"/>
    </location>
</feature>
<feature type="disulfide bond" description="Redox-active" evidence="1">
    <location>
        <begin position="263"/>
        <end position="266"/>
    </location>
</feature>
<name>HSLO_ECO8A</name>
<dbReference type="EMBL" id="CU928160">
    <property type="protein sequence ID" value="CAR00340.1"/>
    <property type="molecule type" value="Genomic_DNA"/>
</dbReference>
<dbReference type="RefSeq" id="WP_001135574.1">
    <property type="nucleotide sequence ID" value="NC_011741.1"/>
</dbReference>
<dbReference type="SMR" id="B7M1V3"/>
<dbReference type="GeneID" id="93778597"/>
<dbReference type="KEGG" id="ecr:ECIAI1_3540"/>
<dbReference type="HOGENOM" id="CLU_054493_0_0_6"/>
<dbReference type="GO" id="GO:0005737">
    <property type="term" value="C:cytoplasm"/>
    <property type="evidence" value="ECO:0007669"/>
    <property type="project" value="UniProtKB-SubCell"/>
</dbReference>
<dbReference type="GO" id="GO:0044183">
    <property type="term" value="F:protein folding chaperone"/>
    <property type="evidence" value="ECO:0007669"/>
    <property type="project" value="TreeGrafter"/>
</dbReference>
<dbReference type="GO" id="GO:0051082">
    <property type="term" value="F:unfolded protein binding"/>
    <property type="evidence" value="ECO:0007669"/>
    <property type="project" value="UniProtKB-UniRule"/>
</dbReference>
<dbReference type="GO" id="GO:0042026">
    <property type="term" value="P:protein refolding"/>
    <property type="evidence" value="ECO:0007669"/>
    <property type="project" value="TreeGrafter"/>
</dbReference>
<dbReference type="CDD" id="cd00498">
    <property type="entry name" value="Hsp33"/>
    <property type="match status" value="1"/>
</dbReference>
<dbReference type="FunFam" id="3.55.30.10:FF:000001">
    <property type="entry name" value="33 kDa chaperonin"/>
    <property type="match status" value="1"/>
</dbReference>
<dbReference type="Gene3D" id="1.10.287.480">
    <property type="entry name" value="helix hairpin bin"/>
    <property type="match status" value="1"/>
</dbReference>
<dbReference type="Gene3D" id="3.55.30.10">
    <property type="entry name" value="Hsp33 domain"/>
    <property type="match status" value="1"/>
</dbReference>
<dbReference type="Gene3D" id="3.90.1280.10">
    <property type="entry name" value="HSP33 redox switch-like"/>
    <property type="match status" value="1"/>
</dbReference>
<dbReference type="HAMAP" id="MF_00117">
    <property type="entry name" value="HslO"/>
    <property type="match status" value="1"/>
</dbReference>
<dbReference type="InterPro" id="IPR000397">
    <property type="entry name" value="Heat_shock_Hsp33"/>
</dbReference>
<dbReference type="InterPro" id="IPR016154">
    <property type="entry name" value="Heat_shock_Hsp33_C"/>
</dbReference>
<dbReference type="InterPro" id="IPR016153">
    <property type="entry name" value="Heat_shock_Hsp33_N"/>
</dbReference>
<dbReference type="InterPro" id="IPR023212">
    <property type="entry name" value="Hsp33_helix_hairpin_bin_dom_sf"/>
</dbReference>
<dbReference type="NCBIfam" id="NF001033">
    <property type="entry name" value="PRK00114.1"/>
    <property type="match status" value="1"/>
</dbReference>
<dbReference type="PANTHER" id="PTHR30111">
    <property type="entry name" value="33 KDA CHAPERONIN"/>
    <property type="match status" value="1"/>
</dbReference>
<dbReference type="PANTHER" id="PTHR30111:SF1">
    <property type="entry name" value="33 KDA CHAPERONIN"/>
    <property type="match status" value="1"/>
</dbReference>
<dbReference type="Pfam" id="PF01430">
    <property type="entry name" value="HSP33"/>
    <property type="match status" value="1"/>
</dbReference>
<dbReference type="PIRSF" id="PIRSF005261">
    <property type="entry name" value="Heat_shock_Hsp33"/>
    <property type="match status" value="1"/>
</dbReference>
<dbReference type="SUPFAM" id="SSF64397">
    <property type="entry name" value="Hsp33 domain"/>
    <property type="match status" value="1"/>
</dbReference>
<dbReference type="SUPFAM" id="SSF118352">
    <property type="entry name" value="HSP33 redox switch-like"/>
    <property type="match status" value="1"/>
</dbReference>